<keyword id="KW-0002">3D-structure</keyword>
<keyword id="KW-0007">Acetylation</keyword>
<keyword id="KW-0903">Direct protein sequencing</keyword>
<keyword id="KW-0249">Electron transport</keyword>
<keyword id="KW-0472">Membrane</keyword>
<keyword id="KW-0496">Mitochondrion</keyword>
<keyword id="KW-0999">Mitochondrion inner membrane</keyword>
<keyword id="KW-0597">Phosphoprotein</keyword>
<keyword id="KW-1185">Reference proteome</keyword>
<keyword id="KW-0679">Respiratory chain</keyword>
<keyword id="KW-0813">Transport</keyword>
<gene>
    <name type="primary">NDUFA5</name>
</gene>
<comment type="function">
    <text evidence="1">Accessory subunit of the mitochondrial membrane respiratory chain NADH dehydrogenase (Complex I), that is believed not to be involved in catalysis. Complex I functions in the transfer of electrons from NADH to the respiratory chain. The immediate electron acceptor for the enzyme is believed to be ubiquinone.</text>
</comment>
<comment type="subunit">
    <text evidence="4 5">Complex I is composed of 45 different subunits.</text>
</comment>
<comment type="subcellular location">
    <subcellularLocation>
        <location evidence="8 9 10 11">Mitochondrion inner membrane</location>
        <topology>Peripheral membrane protein</topology>
        <orientation>Matrix side</orientation>
    </subcellularLocation>
</comment>
<comment type="similarity">
    <text evidence="7">Belongs to the complex I NDUFA5 subunit family.</text>
</comment>
<dbReference type="EMBL" id="X63218">
    <property type="protein sequence ID" value="CAA44903.1"/>
    <property type="molecule type" value="mRNA"/>
</dbReference>
<dbReference type="EMBL" id="BC108243">
    <property type="protein sequence ID" value="AAI08244.1"/>
    <property type="molecule type" value="mRNA"/>
</dbReference>
<dbReference type="PIR" id="S28244">
    <property type="entry name" value="S28244"/>
</dbReference>
<dbReference type="RefSeq" id="NP_787023.1">
    <property type="nucleotide sequence ID" value="NM_175829.2"/>
</dbReference>
<dbReference type="PDB" id="5LC5">
    <property type="method" value="EM"/>
    <property type="resolution" value="4.35 A"/>
    <property type="chains" value="V=1-116"/>
</dbReference>
<dbReference type="PDB" id="5LDW">
    <property type="method" value="EM"/>
    <property type="resolution" value="4.27 A"/>
    <property type="chains" value="V=2-116"/>
</dbReference>
<dbReference type="PDB" id="5LDX">
    <property type="method" value="EM"/>
    <property type="resolution" value="5.60 A"/>
    <property type="chains" value="V=2-116"/>
</dbReference>
<dbReference type="PDB" id="5O31">
    <property type="method" value="EM"/>
    <property type="resolution" value="4.13 A"/>
    <property type="chains" value="V=2-116"/>
</dbReference>
<dbReference type="PDB" id="7DGQ">
    <property type="method" value="EM"/>
    <property type="resolution" value="5.00 A"/>
    <property type="chains" value="N=2-116"/>
</dbReference>
<dbReference type="PDB" id="7DGR">
    <property type="method" value="EM"/>
    <property type="resolution" value="4.60 A"/>
    <property type="chains" value="N=2-116"/>
</dbReference>
<dbReference type="PDB" id="7DGS">
    <property type="method" value="EM"/>
    <property type="resolution" value="7.80 A"/>
    <property type="chains" value="N=2-116"/>
</dbReference>
<dbReference type="PDB" id="7DGZ">
    <property type="method" value="EM"/>
    <property type="resolution" value="3.80 A"/>
    <property type="chains" value="N=2-116"/>
</dbReference>
<dbReference type="PDB" id="7DH0">
    <property type="method" value="EM"/>
    <property type="resolution" value="4.20 A"/>
    <property type="chains" value="N=2-116"/>
</dbReference>
<dbReference type="PDB" id="7DKF">
    <property type="method" value="EM"/>
    <property type="resolution" value="8.30 A"/>
    <property type="chains" value="N2=2-116"/>
</dbReference>
<dbReference type="PDB" id="7QSD">
    <property type="method" value="EM"/>
    <property type="resolution" value="3.10 A"/>
    <property type="chains" value="V=1-116"/>
</dbReference>
<dbReference type="PDB" id="7QSK">
    <property type="method" value="EM"/>
    <property type="resolution" value="2.84 A"/>
    <property type="chains" value="V=1-116"/>
</dbReference>
<dbReference type="PDB" id="7QSL">
    <property type="method" value="EM"/>
    <property type="resolution" value="2.76 A"/>
    <property type="chains" value="V=1-116"/>
</dbReference>
<dbReference type="PDB" id="7QSM">
    <property type="method" value="EM"/>
    <property type="resolution" value="2.30 A"/>
    <property type="chains" value="V=1-116"/>
</dbReference>
<dbReference type="PDB" id="7QSN">
    <property type="method" value="EM"/>
    <property type="resolution" value="2.81 A"/>
    <property type="chains" value="V=1-116"/>
</dbReference>
<dbReference type="PDB" id="7QSO">
    <property type="method" value="EM"/>
    <property type="resolution" value="3.02 A"/>
    <property type="chains" value="V=1-116"/>
</dbReference>
<dbReference type="PDB" id="7R41">
    <property type="method" value="EM"/>
    <property type="resolution" value="2.30 A"/>
    <property type="chains" value="V=1-116"/>
</dbReference>
<dbReference type="PDB" id="7R42">
    <property type="method" value="EM"/>
    <property type="resolution" value="2.30 A"/>
    <property type="chains" value="V=1-116"/>
</dbReference>
<dbReference type="PDB" id="7R43">
    <property type="method" value="EM"/>
    <property type="resolution" value="2.40 A"/>
    <property type="chains" value="V=1-116"/>
</dbReference>
<dbReference type="PDB" id="7R44">
    <property type="method" value="EM"/>
    <property type="resolution" value="2.40 A"/>
    <property type="chains" value="V=1-116"/>
</dbReference>
<dbReference type="PDB" id="7R45">
    <property type="method" value="EM"/>
    <property type="resolution" value="2.40 A"/>
    <property type="chains" value="V=1-116"/>
</dbReference>
<dbReference type="PDB" id="7R46">
    <property type="method" value="EM"/>
    <property type="resolution" value="2.40 A"/>
    <property type="chains" value="V=1-116"/>
</dbReference>
<dbReference type="PDB" id="7R47">
    <property type="method" value="EM"/>
    <property type="resolution" value="2.30 A"/>
    <property type="chains" value="V=1-116"/>
</dbReference>
<dbReference type="PDB" id="7R48">
    <property type="method" value="EM"/>
    <property type="resolution" value="2.30 A"/>
    <property type="chains" value="V=1-116"/>
</dbReference>
<dbReference type="PDB" id="7R4C">
    <property type="method" value="EM"/>
    <property type="resolution" value="2.30 A"/>
    <property type="chains" value="V=1-116"/>
</dbReference>
<dbReference type="PDB" id="7R4D">
    <property type="method" value="EM"/>
    <property type="resolution" value="2.30 A"/>
    <property type="chains" value="V=1-116"/>
</dbReference>
<dbReference type="PDB" id="7R4F">
    <property type="method" value="EM"/>
    <property type="resolution" value="2.40 A"/>
    <property type="chains" value="V=1-116"/>
</dbReference>
<dbReference type="PDB" id="7R4G">
    <property type="method" value="EM"/>
    <property type="resolution" value="2.50 A"/>
    <property type="chains" value="V=1-116"/>
</dbReference>
<dbReference type="PDB" id="8Q0A">
    <property type="method" value="EM"/>
    <property type="resolution" value="3.10 A"/>
    <property type="chains" value="V=1-116"/>
</dbReference>
<dbReference type="PDB" id="8Q0F">
    <property type="method" value="EM"/>
    <property type="resolution" value="3.10 A"/>
    <property type="chains" value="V=1-116"/>
</dbReference>
<dbReference type="PDB" id="8Q0J">
    <property type="method" value="EM"/>
    <property type="resolution" value="3.80 A"/>
    <property type="chains" value="V=1-116"/>
</dbReference>
<dbReference type="PDB" id="8Q0M">
    <property type="method" value="EM"/>
    <property type="resolution" value="3.10 A"/>
    <property type="chains" value="V=1-116"/>
</dbReference>
<dbReference type="PDB" id="8Q0O">
    <property type="method" value="EM"/>
    <property type="resolution" value="3.10 A"/>
    <property type="chains" value="V=1-116"/>
</dbReference>
<dbReference type="PDB" id="8Q0Q">
    <property type="method" value="EM"/>
    <property type="resolution" value="3.60 A"/>
    <property type="chains" value="V=1-116"/>
</dbReference>
<dbReference type="PDB" id="8Q1P">
    <property type="method" value="EM"/>
    <property type="resolution" value="2.90 A"/>
    <property type="chains" value="V=1-116"/>
</dbReference>
<dbReference type="PDB" id="8Q1U">
    <property type="method" value="EM"/>
    <property type="resolution" value="3.30 A"/>
    <property type="chains" value="V=1-116"/>
</dbReference>
<dbReference type="PDB" id="8Q1Y">
    <property type="method" value="EM"/>
    <property type="resolution" value="2.60 A"/>
    <property type="chains" value="V=1-116"/>
</dbReference>
<dbReference type="PDB" id="8Q25">
    <property type="method" value="EM"/>
    <property type="resolution" value="2.80 A"/>
    <property type="chains" value="V=1-116"/>
</dbReference>
<dbReference type="PDB" id="8Q45">
    <property type="method" value="EM"/>
    <property type="resolution" value="2.70 A"/>
    <property type="chains" value="V=1-116"/>
</dbReference>
<dbReference type="PDB" id="8Q46">
    <property type="method" value="EM"/>
    <property type="resolution" value="2.60 A"/>
    <property type="chains" value="V=1-116"/>
</dbReference>
<dbReference type="PDB" id="8Q47">
    <property type="method" value="EM"/>
    <property type="resolution" value="2.90 A"/>
    <property type="chains" value="V=1-116"/>
</dbReference>
<dbReference type="PDB" id="8Q48">
    <property type="method" value="EM"/>
    <property type="resolution" value="2.50 A"/>
    <property type="chains" value="V=1-116"/>
</dbReference>
<dbReference type="PDB" id="8Q49">
    <property type="method" value="EM"/>
    <property type="resolution" value="2.60 A"/>
    <property type="chains" value="V=1-116"/>
</dbReference>
<dbReference type="PDB" id="8Q4A">
    <property type="method" value="EM"/>
    <property type="resolution" value="2.60 A"/>
    <property type="chains" value="V=1-116"/>
</dbReference>
<dbReference type="PDBsum" id="5LC5"/>
<dbReference type="PDBsum" id="5LDW"/>
<dbReference type="PDBsum" id="5LDX"/>
<dbReference type="PDBsum" id="5O31"/>
<dbReference type="PDBsum" id="7DGQ"/>
<dbReference type="PDBsum" id="7DGR"/>
<dbReference type="PDBsum" id="7DGS"/>
<dbReference type="PDBsum" id="7DGZ"/>
<dbReference type="PDBsum" id="7DH0"/>
<dbReference type="PDBsum" id="7DKF"/>
<dbReference type="PDBsum" id="7QSD"/>
<dbReference type="PDBsum" id="7QSK"/>
<dbReference type="PDBsum" id="7QSL"/>
<dbReference type="PDBsum" id="7QSM"/>
<dbReference type="PDBsum" id="7QSN"/>
<dbReference type="PDBsum" id="7QSO"/>
<dbReference type="PDBsum" id="7R41"/>
<dbReference type="PDBsum" id="7R42"/>
<dbReference type="PDBsum" id="7R43"/>
<dbReference type="PDBsum" id="7R44"/>
<dbReference type="PDBsum" id="7R45"/>
<dbReference type="PDBsum" id="7R46"/>
<dbReference type="PDBsum" id="7R47"/>
<dbReference type="PDBsum" id="7R48"/>
<dbReference type="PDBsum" id="7R4C"/>
<dbReference type="PDBsum" id="7R4D"/>
<dbReference type="PDBsum" id="7R4F"/>
<dbReference type="PDBsum" id="7R4G"/>
<dbReference type="PDBsum" id="8Q0A"/>
<dbReference type="PDBsum" id="8Q0F"/>
<dbReference type="PDBsum" id="8Q0J"/>
<dbReference type="PDBsum" id="8Q0M"/>
<dbReference type="PDBsum" id="8Q0O"/>
<dbReference type="PDBsum" id="8Q0Q"/>
<dbReference type="PDBsum" id="8Q1P"/>
<dbReference type="PDBsum" id="8Q1U"/>
<dbReference type="PDBsum" id="8Q1Y"/>
<dbReference type="PDBsum" id="8Q25"/>
<dbReference type="PDBsum" id="8Q45"/>
<dbReference type="PDBsum" id="8Q46"/>
<dbReference type="PDBsum" id="8Q47"/>
<dbReference type="PDBsum" id="8Q48"/>
<dbReference type="PDBsum" id="8Q49"/>
<dbReference type="PDBsum" id="8Q4A"/>
<dbReference type="EMDB" id="EMD-14127"/>
<dbReference type="EMDB" id="EMD-14132"/>
<dbReference type="EMDB" id="EMD-14133"/>
<dbReference type="EMDB" id="EMD-14134"/>
<dbReference type="EMDB" id="EMD-14139"/>
<dbReference type="EMDB" id="EMD-14140"/>
<dbReference type="EMDB" id="EMD-14251"/>
<dbReference type="EMDB" id="EMD-14256"/>
<dbReference type="EMDB" id="EMD-14261"/>
<dbReference type="EMDB" id="EMD-14266"/>
<dbReference type="EMDB" id="EMD-14272"/>
<dbReference type="EMDB" id="EMD-14277"/>
<dbReference type="EMDB" id="EMD-14282"/>
<dbReference type="EMDB" id="EMD-14287"/>
<dbReference type="EMDB" id="EMD-14292"/>
<dbReference type="EMDB" id="EMD-14297"/>
<dbReference type="EMDB" id="EMD-14302"/>
<dbReference type="EMDB" id="EMD-14307"/>
<dbReference type="EMDB" id="EMD-18051"/>
<dbReference type="EMDB" id="EMD-18052"/>
<dbReference type="EMDB" id="EMD-18054"/>
<dbReference type="EMDB" id="EMD-18055"/>
<dbReference type="EMDB" id="EMD-18057"/>
<dbReference type="EMDB" id="EMD-18059"/>
<dbReference type="EMDB" id="EMD-18066"/>
<dbReference type="EMDB" id="EMD-18067"/>
<dbReference type="EMDB" id="EMD-18068"/>
<dbReference type="EMDB" id="EMD-18069"/>
<dbReference type="EMDB" id="EMD-18138"/>
<dbReference type="EMDB" id="EMD-18139"/>
<dbReference type="EMDB" id="EMD-18140"/>
<dbReference type="EMDB" id="EMD-18141"/>
<dbReference type="EMDB" id="EMD-18142"/>
<dbReference type="EMDB" id="EMD-18143"/>
<dbReference type="EMDB" id="EMD-30673"/>
<dbReference type="EMDB" id="EMD-30674"/>
<dbReference type="EMDB" id="EMD-30675"/>
<dbReference type="EMDB" id="EMD-30676"/>
<dbReference type="EMDB" id="EMD-30677"/>
<dbReference type="EMDB" id="EMD-30706"/>
<dbReference type="EMDB" id="EMD-3731"/>
<dbReference type="EMDB" id="EMD-4032"/>
<dbReference type="EMDB" id="EMD-4040"/>
<dbReference type="EMDB" id="EMD-4041"/>
<dbReference type="SMR" id="P23935"/>
<dbReference type="CORUM" id="P23935"/>
<dbReference type="DIP" id="DIP-38832N"/>
<dbReference type="FunCoup" id="P23935">
    <property type="interactions" value="2220"/>
</dbReference>
<dbReference type="IntAct" id="P23935">
    <property type="interactions" value="4"/>
</dbReference>
<dbReference type="STRING" id="9913.ENSBTAP00000012287"/>
<dbReference type="TCDB" id="3.D.1.6.1">
    <property type="family name" value="the h+ or na+-translocating nadh dehydrogenase (ndh) family"/>
</dbReference>
<dbReference type="iPTMnet" id="P23935"/>
<dbReference type="PaxDb" id="9913-ENSBTAP00000012287"/>
<dbReference type="Ensembl" id="ENSBTAT00000087990.1">
    <property type="protein sequence ID" value="ENSBTAP00000088465.1"/>
    <property type="gene ID" value="ENSBTAG00000009334.7"/>
</dbReference>
<dbReference type="GeneID" id="327714"/>
<dbReference type="KEGG" id="bta:327714"/>
<dbReference type="CTD" id="4698"/>
<dbReference type="VEuPathDB" id="HostDB:ENSBTAG00000009334"/>
<dbReference type="VGNC" id="VGNC:31949">
    <property type="gene designation" value="NDUFA5"/>
</dbReference>
<dbReference type="eggNOG" id="KOG3365">
    <property type="taxonomic scope" value="Eukaryota"/>
</dbReference>
<dbReference type="GeneTree" id="ENSGT00390000008099"/>
<dbReference type="HOGENOM" id="CLU_099943_2_0_1"/>
<dbReference type="InParanoid" id="P23935"/>
<dbReference type="OMA" id="ENQWKWP"/>
<dbReference type="OrthoDB" id="286811at2759"/>
<dbReference type="TreeFam" id="TF313785"/>
<dbReference type="Reactome" id="R-BTA-611105">
    <property type="pathway name" value="Respiratory electron transport"/>
</dbReference>
<dbReference type="Reactome" id="R-BTA-6799198">
    <property type="pathway name" value="Complex I biogenesis"/>
</dbReference>
<dbReference type="Reactome" id="R-BTA-9013408">
    <property type="pathway name" value="RHOG GTPase cycle"/>
</dbReference>
<dbReference type="Proteomes" id="UP000009136">
    <property type="component" value="Chromosome 4"/>
</dbReference>
<dbReference type="Bgee" id="ENSBTAG00000009334">
    <property type="expression patterns" value="Expressed in tongue muscle and 104 other cell types or tissues"/>
</dbReference>
<dbReference type="GO" id="GO:0005743">
    <property type="term" value="C:mitochondrial inner membrane"/>
    <property type="evidence" value="ECO:0007669"/>
    <property type="project" value="UniProtKB-SubCell"/>
</dbReference>
<dbReference type="GO" id="GO:0005739">
    <property type="term" value="C:mitochondrion"/>
    <property type="evidence" value="ECO:0000305"/>
    <property type="project" value="UniProtKB"/>
</dbReference>
<dbReference type="GO" id="GO:0045271">
    <property type="term" value="C:respiratory chain complex I"/>
    <property type="evidence" value="ECO:0000314"/>
    <property type="project" value="UniProtKB"/>
</dbReference>
<dbReference type="GO" id="GO:0022904">
    <property type="term" value="P:respiratory electron transport chain"/>
    <property type="evidence" value="ECO:0000318"/>
    <property type="project" value="GO_Central"/>
</dbReference>
<dbReference type="InterPro" id="IPR006806">
    <property type="entry name" value="NDUFA5"/>
</dbReference>
<dbReference type="PANTHER" id="PTHR12653:SF0">
    <property type="entry name" value="NADH DEHYDROGENASE [UBIQUINONE] 1 ALPHA SUBCOMPLEX SUBUNIT 5"/>
    <property type="match status" value="1"/>
</dbReference>
<dbReference type="PANTHER" id="PTHR12653">
    <property type="entry name" value="NADH-UBIQUINONE OXIDOREDUCTASE 13 KD-B SUBUNIT"/>
    <property type="match status" value="1"/>
</dbReference>
<dbReference type="Pfam" id="PF04716">
    <property type="entry name" value="ETC_C1_NDUFA5"/>
    <property type="match status" value="1"/>
</dbReference>
<name>NDUA5_BOVIN</name>
<feature type="initiator methionine" description="Removed" evidence="6">
    <location>
        <position position="1"/>
    </location>
</feature>
<feature type="chain" id="PRO_0000118631" description="NADH dehydrogenase [ubiquinone] 1 alpha subcomplex subunit 5">
    <location>
        <begin position="2"/>
        <end position="116"/>
    </location>
</feature>
<feature type="modified residue" description="N-acetylalanine" evidence="6">
    <location>
        <position position="2"/>
    </location>
</feature>
<feature type="modified residue" description="N6-acetyllysine" evidence="1">
    <location>
        <position position="30"/>
    </location>
</feature>
<feature type="modified residue" description="N6-acetyllysine" evidence="3">
    <location>
        <position position="46"/>
    </location>
</feature>
<feature type="modified residue" description="N6-acetyllysine" evidence="1">
    <location>
        <position position="60"/>
    </location>
</feature>
<feature type="modified residue" description="Phosphoserine" evidence="2">
    <location>
        <position position="89"/>
    </location>
</feature>
<feature type="modified residue" description="N6-acetyllysine; alternate" evidence="3">
    <location>
        <position position="98"/>
    </location>
</feature>
<feature type="modified residue" description="N6-succinyllysine; alternate" evidence="3">
    <location>
        <position position="98"/>
    </location>
</feature>
<feature type="sequence conflict" description="In Ref. 3; AA sequence." evidence="7" ref="3">
    <original>P</original>
    <variation>W</variation>
    <location>
        <position position="108"/>
    </location>
</feature>
<feature type="sequence conflict" description="In Ref. 3; AA sequence." evidence="7" ref="3">
    <location>
        <position position="112"/>
    </location>
</feature>
<feature type="strand" evidence="13">
    <location>
        <begin position="10"/>
        <end position="13"/>
    </location>
</feature>
<feature type="helix" evidence="12">
    <location>
        <begin position="20"/>
        <end position="35"/>
    </location>
</feature>
<feature type="helix" evidence="12">
    <location>
        <begin position="43"/>
        <end position="61"/>
    </location>
</feature>
<feature type="helix" evidence="12">
    <location>
        <begin position="65"/>
        <end position="72"/>
    </location>
</feature>
<feature type="strand" evidence="12">
    <location>
        <begin position="74"/>
        <end position="76"/>
    </location>
</feature>
<feature type="helix" evidence="12">
    <location>
        <begin position="77"/>
        <end position="97"/>
    </location>
</feature>
<feature type="turn" evidence="12">
    <location>
        <begin position="109"/>
        <end position="112"/>
    </location>
</feature>
<reference key="1">
    <citation type="journal article" date="1992" name="J. Mol. Biol.">
        <title>Sequences of 20 subunits of NADH:ubiquinone oxidoreductase from bovine heart mitochondria. Application of a novel strategy for sequencing proteins using the polymerase chain reaction.</title>
        <authorList>
            <person name="Walker J.E."/>
            <person name="Arizmendi J.M."/>
            <person name="Dupuis A."/>
            <person name="Fearnley I.M."/>
            <person name="Finel M."/>
            <person name="Medd S.M."/>
            <person name="Pilkington S.J."/>
            <person name="Runswick M.J."/>
            <person name="Skehel J.M."/>
        </authorList>
    </citation>
    <scope>NUCLEOTIDE SEQUENCE [MRNA]</scope>
    <scope>PARTIAL PROTEIN SEQUENCE</scope>
    <scope>SUBCELLULAR LOCATION</scope>
    <source>
        <tissue>Heart</tissue>
    </source>
</reference>
<reference key="2">
    <citation type="submission" date="2005-10" db="EMBL/GenBank/DDBJ databases">
        <authorList>
            <consortium name="NIH - Mammalian Gene Collection (MGC) project"/>
        </authorList>
    </citation>
    <scope>NUCLEOTIDE SEQUENCE [LARGE SCALE MRNA]</scope>
    <source>
        <strain>Crossbred X Angus</strain>
        <tissue>Liver</tissue>
    </source>
</reference>
<reference key="3">
    <citation type="journal article" date="1991" name="J. Biochem.">
        <title>The amino acid sequences of two 13 kDa polypeptides and partial amino acid sequence of 30 kDa polypeptide of complex I from bovine heart mitochondria: possible location of iron-sulfur clusters.</title>
        <authorList>
            <person name="Masui R."/>
            <person name="Wakabayashi S."/>
            <person name="Matsubara H."/>
            <person name="Hatefi Y."/>
        </authorList>
    </citation>
    <scope>PROTEIN SEQUENCE OF 2-116</scope>
    <scope>ACETYLATION AT ALA-2</scope>
    <scope>SUBCELLULAR LOCATION</scope>
    <source>
        <tissue>Heart</tissue>
    </source>
</reference>
<reference key="4">
    <citation type="journal article" date="2000" name="Biochemistry">
        <title>Resolution of the membrane domain of bovine complex I into subcomplexes: implications for the structural organization of the enzyme.</title>
        <authorList>
            <person name="Sazanov L.A."/>
            <person name="Peak-Chew S.Y."/>
            <person name="Fearnley I.M."/>
            <person name="Walker J.E."/>
        </authorList>
    </citation>
    <scope>PARTIAL PROTEIN SEQUENCE</scope>
    <scope>SUBUNIT</scope>
    <scope>IDENTIFICATION IN COMPLEX I</scope>
    <scope>SUBCELLULAR LOCATION</scope>
</reference>
<reference key="5">
    <citation type="journal article" date="2008" name="Anal. Biochem.">
        <title>Subunit analysis of bovine heart complex I by reversed-phase high-performance liquid chromatography, electrospray ionization-tandem mass spectrometry, and matrix-assisted laser desorption/ionization-time-of-flight mass spectrometry.</title>
        <authorList>
            <person name="Lemma-Gray P."/>
            <person name="Valusova E."/>
            <person name="Carroll C.A."/>
            <person name="Weintraub S.T."/>
            <person name="Musatov A."/>
            <person name="Robinson N.C."/>
        </authorList>
    </citation>
    <scope>SUBUNIT</scope>
    <scope>IDENTIFICATION IN COMPLEX I</scope>
    <scope>SUBCELLULAR LOCATION</scope>
</reference>
<organism>
    <name type="scientific">Bos taurus</name>
    <name type="common">Bovine</name>
    <dbReference type="NCBI Taxonomy" id="9913"/>
    <lineage>
        <taxon>Eukaryota</taxon>
        <taxon>Metazoa</taxon>
        <taxon>Chordata</taxon>
        <taxon>Craniata</taxon>
        <taxon>Vertebrata</taxon>
        <taxon>Euteleostomi</taxon>
        <taxon>Mammalia</taxon>
        <taxon>Eutheria</taxon>
        <taxon>Laurasiatheria</taxon>
        <taxon>Artiodactyla</taxon>
        <taxon>Ruminantia</taxon>
        <taxon>Pecora</taxon>
        <taxon>Bovidae</taxon>
        <taxon>Bovinae</taxon>
        <taxon>Bos</taxon>
    </lineage>
</organism>
<accession>P23935</accession>
<accession>Q32P63</accession>
<evidence type="ECO:0000250" key="1">
    <source>
        <dbReference type="UniProtKB" id="Q16718"/>
    </source>
</evidence>
<evidence type="ECO:0000250" key="2">
    <source>
        <dbReference type="UniProtKB" id="Q63362"/>
    </source>
</evidence>
<evidence type="ECO:0000250" key="3">
    <source>
        <dbReference type="UniProtKB" id="Q9CPP6"/>
    </source>
</evidence>
<evidence type="ECO:0000269" key="4">
    <source>
    </source>
</evidence>
<evidence type="ECO:0000269" key="5">
    <source>
    </source>
</evidence>
<evidence type="ECO:0000269" key="6">
    <source>
    </source>
</evidence>
<evidence type="ECO:0000305" key="7"/>
<evidence type="ECO:0000305" key="8">
    <source>
    </source>
</evidence>
<evidence type="ECO:0000305" key="9">
    <source>
    </source>
</evidence>
<evidence type="ECO:0000305" key="10">
    <source>
    </source>
</evidence>
<evidence type="ECO:0000305" key="11">
    <source>
    </source>
</evidence>
<evidence type="ECO:0007829" key="12">
    <source>
        <dbReference type="PDB" id="7QSM"/>
    </source>
</evidence>
<evidence type="ECO:0007829" key="13">
    <source>
        <dbReference type="PDB" id="8Q0O"/>
    </source>
</evidence>
<proteinExistence type="evidence at protein level"/>
<sequence>MAGLLKKTTGLVGLAVCETPHERLKILYTKILDVLGHIPKNAAYRKYTEQITNEKLSMVKAEPDVKKLEERLQGGQIEEVILQAENELSLARKMIQWKPWEPLVEEPPASQWKWPI</sequence>
<protein>
    <recommendedName>
        <fullName>NADH dehydrogenase [ubiquinone] 1 alpha subcomplex subunit 5</fullName>
    </recommendedName>
    <alternativeName>
        <fullName>Complex I subunit B13</fullName>
    </alternativeName>
    <alternativeName>
        <fullName>Complex I-13kD-B</fullName>
        <shortName>CI-13kD-B</shortName>
    </alternativeName>
    <alternativeName>
        <fullName>NADH-ubiquinone oxidoreductase 13 kDa-B subunit</fullName>
    </alternativeName>
</protein>